<comment type="function">
    <text>Tubulin is the major constituent of microtubules, a cylinder consisting of laterally associated linear protofilaments composed of alpha- and beta-tubulin heterodimers. Microtubules grow by the addition of GTP-tubulin dimers to the microtubule end, where a stabilizing cap forms. Below the cap, tubulin dimers are in GDP-bound state, owing to GTPase activity of alpha-tubulin.</text>
</comment>
<comment type="function">
    <text>This is the major beta tubulin of mitotic spindle.</text>
</comment>
<comment type="cofactor">
    <cofactor evidence="1">
        <name>Mg(2+)</name>
        <dbReference type="ChEBI" id="CHEBI:18420"/>
    </cofactor>
</comment>
<comment type="subunit">
    <text>Dimer of alpha and beta chains. A typical microtubule is a hollow water-filled tube with an outer diameter of 25 nm and an inner diameter of 15 nM. Alpha-beta heterodimers associate head-to-tail to form protofilaments running lengthwise along the microtubule wall with the beta-tubulin subunit facing the microtubule plus end conferring a structural polarity. Microtubules usually have 13 protofilaments but different protofilament numbers can be found in some organisms and specialized cells.</text>
</comment>
<comment type="subcellular location">
    <subcellularLocation>
        <location>Cytoplasm</location>
        <location>Cytoskeleton</location>
        <location>Spindle</location>
    </subcellularLocation>
    <subcellularLocation>
        <location>Nucleus</location>
    </subcellularLocation>
    <text>Mitosis in the slime mold Plasmodium differs from the process in many eukaryotes. The tubulin chains must be transported to the nuclei for intranuclear assembly of the spindle.</text>
</comment>
<comment type="developmental stage">
    <text>Preferentially expressed in Plasmodium.</text>
</comment>
<comment type="similarity">
    <text evidence="4">Belongs to the tubulin family.</text>
</comment>
<gene>
    <name type="primary">BETC</name>
</gene>
<keyword id="KW-0963">Cytoplasm</keyword>
<keyword id="KW-0206">Cytoskeleton</keyword>
<keyword id="KW-0342">GTP-binding</keyword>
<keyword id="KW-0460">Magnesium</keyword>
<keyword id="KW-0479">Metal-binding</keyword>
<keyword id="KW-0493">Microtubule</keyword>
<keyword id="KW-0547">Nucleotide-binding</keyword>
<keyword id="KW-0539">Nucleus</keyword>
<organism>
    <name type="scientific">Physarum polycephalum</name>
    <name type="common">Slime mold</name>
    <dbReference type="NCBI Taxonomy" id="5791"/>
    <lineage>
        <taxon>Eukaryota</taxon>
        <taxon>Amoebozoa</taxon>
        <taxon>Evosea</taxon>
        <taxon>Eumycetozoa</taxon>
        <taxon>Myxogastria</taxon>
        <taxon>Myxogastromycetidae</taxon>
        <taxon>Physariida</taxon>
        <taxon>Physaraceae</taxon>
        <taxon>Physarum</taxon>
    </lineage>
</organism>
<accession>P12458</accession>
<evidence type="ECO:0000250" key="1">
    <source>
        <dbReference type="UniProtKB" id="P68363"/>
    </source>
</evidence>
<evidence type="ECO:0000250" key="2">
    <source>
        <dbReference type="UniProtKB" id="Q13509"/>
    </source>
</evidence>
<evidence type="ECO:0000256" key="3">
    <source>
        <dbReference type="SAM" id="MobiDB-lite"/>
    </source>
</evidence>
<evidence type="ECO:0000305" key="4"/>
<protein>
    <recommendedName>
        <fullName>Tubulin beta-2 chain</fullName>
    </recommendedName>
    <alternativeName>
        <fullName>Tubulin beta-major chain</fullName>
    </alternativeName>
</protein>
<feature type="chain" id="PRO_0000048310" description="Tubulin beta-2 chain">
    <location>
        <begin position="1"/>
        <end position="454"/>
    </location>
</feature>
<feature type="region of interest" description="Disordered" evidence="3">
    <location>
        <begin position="426"/>
        <end position="454"/>
    </location>
</feature>
<feature type="compositionally biased region" description="Acidic residues" evidence="3">
    <location>
        <begin position="429"/>
        <end position="441"/>
    </location>
</feature>
<feature type="binding site" evidence="2">
    <location>
        <position position="11"/>
    </location>
    <ligand>
        <name>GTP</name>
        <dbReference type="ChEBI" id="CHEBI:37565"/>
    </ligand>
</feature>
<feature type="binding site" evidence="1">
    <location>
        <position position="69"/>
    </location>
    <ligand>
        <name>GTP</name>
        <dbReference type="ChEBI" id="CHEBI:37565"/>
    </ligand>
</feature>
<feature type="binding site" evidence="1">
    <location>
        <position position="69"/>
    </location>
    <ligand>
        <name>Mg(2+)</name>
        <dbReference type="ChEBI" id="CHEBI:18420"/>
    </ligand>
</feature>
<feature type="binding site" evidence="2">
    <location>
        <position position="138"/>
    </location>
    <ligand>
        <name>GTP</name>
        <dbReference type="ChEBI" id="CHEBI:37565"/>
    </ligand>
</feature>
<feature type="binding site" evidence="2">
    <location>
        <position position="142"/>
    </location>
    <ligand>
        <name>GTP</name>
        <dbReference type="ChEBI" id="CHEBI:37565"/>
    </ligand>
</feature>
<feature type="binding site" evidence="2">
    <location>
        <position position="143"/>
    </location>
    <ligand>
        <name>GTP</name>
        <dbReference type="ChEBI" id="CHEBI:37565"/>
    </ligand>
</feature>
<feature type="binding site" evidence="2">
    <location>
        <position position="144"/>
    </location>
    <ligand>
        <name>GTP</name>
        <dbReference type="ChEBI" id="CHEBI:37565"/>
    </ligand>
</feature>
<feature type="binding site" evidence="2">
    <location>
        <position position="204"/>
    </location>
    <ligand>
        <name>GTP</name>
        <dbReference type="ChEBI" id="CHEBI:37565"/>
    </ligand>
</feature>
<feature type="binding site" evidence="2">
    <location>
        <position position="226"/>
    </location>
    <ligand>
        <name>GTP</name>
        <dbReference type="ChEBI" id="CHEBI:37565"/>
    </ligand>
</feature>
<name>TBB2_PHYPO</name>
<dbReference type="EMBL" id="M20191">
    <property type="protein sequence ID" value="AAA29977.1"/>
    <property type="molecule type" value="mRNA"/>
</dbReference>
<dbReference type="PIR" id="A33655">
    <property type="entry name" value="A33655"/>
</dbReference>
<dbReference type="SMR" id="P12458"/>
<dbReference type="GO" id="GO:0005737">
    <property type="term" value="C:cytoplasm"/>
    <property type="evidence" value="ECO:0007669"/>
    <property type="project" value="UniProtKB-KW"/>
</dbReference>
<dbReference type="GO" id="GO:0005874">
    <property type="term" value="C:microtubule"/>
    <property type="evidence" value="ECO:0007669"/>
    <property type="project" value="UniProtKB-KW"/>
</dbReference>
<dbReference type="GO" id="GO:0005634">
    <property type="term" value="C:nucleus"/>
    <property type="evidence" value="ECO:0007669"/>
    <property type="project" value="UniProtKB-SubCell"/>
</dbReference>
<dbReference type="GO" id="GO:0005819">
    <property type="term" value="C:spindle"/>
    <property type="evidence" value="ECO:0007669"/>
    <property type="project" value="UniProtKB-SubCell"/>
</dbReference>
<dbReference type="GO" id="GO:0005525">
    <property type="term" value="F:GTP binding"/>
    <property type="evidence" value="ECO:0007669"/>
    <property type="project" value="UniProtKB-KW"/>
</dbReference>
<dbReference type="GO" id="GO:0003924">
    <property type="term" value="F:GTPase activity"/>
    <property type="evidence" value="ECO:0007669"/>
    <property type="project" value="InterPro"/>
</dbReference>
<dbReference type="GO" id="GO:0046872">
    <property type="term" value="F:metal ion binding"/>
    <property type="evidence" value="ECO:0007669"/>
    <property type="project" value="UniProtKB-KW"/>
</dbReference>
<dbReference type="GO" id="GO:0005200">
    <property type="term" value="F:structural constituent of cytoskeleton"/>
    <property type="evidence" value="ECO:0007669"/>
    <property type="project" value="InterPro"/>
</dbReference>
<dbReference type="GO" id="GO:0007017">
    <property type="term" value="P:microtubule-based process"/>
    <property type="evidence" value="ECO:0007669"/>
    <property type="project" value="InterPro"/>
</dbReference>
<dbReference type="CDD" id="cd02187">
    <property type="entry name" value="beta_tubulin"/>
    <property type="match status" value="1"/>
</dbReference>
<dbReference type="FunFam" id="1.10.287.600:FF:000003">
    <property type="entry name" value="Tubulin beta chain"/>
    <property type="match status" value="1"/>
</dbReference>
<dbReference type="FunFam" id="3.30.1330.20:FF:000002">
    <property type="entry name" value="Tubulin beta chain"/>
    <property type="match status" value="1"/>
</dbReference>
<dbReference type="FunFam" id="3.40.50.1440:FF:000006">
    <property type="entry name" value="Tubulin beta chain"/>
    <property type="match status" value="1"/>
</dbReference>
<dbReference type="Gene3D" id="1.10.287.600">
    <property type="entry name" value="Helix hairpin bin"/>
    <property type="match status" value="1"/>
</dbReference>
<dbReference type="Gene3D" id="3.30.1330.20">
    <property type="entry name" value="Tubulin/FtsZ, C-terminal domain"/>
    <property type="match status" value="1"/>
</dbReference>
<dbReference type="Gene3D" id="3.40.50.1440">
    <property type="entry name" value="Tubulin/FtsZ, GTPase domain"/>
    <property type="match status" value="1"/>
</dbReference>
<dbReference type="InterPro" id="IPR013838">
    <property type="entry name" value="Beta-tubulin_BS"/>
</dbReference>
<dbReference type="InterPro" id="IPR002453">
    <property type="entry name" value="Beta_tubulin"/>
</dbReference>
<dbReference type="InterPro" id="IPR008280">
    <property type="entry name" value="Tub_FtsZ_C"/>
</dbReference>
<dbReference type="InterPro" id="IPR000217">
    <property type="entry name" value="Tubulin"/>
</dbReference>
<dbReference type="InterPro" id="IPR037103">
    <property type="entry name" value="Tubulin/FtsZ-like_C"/>
</dbReference>
<dbReference type="InterPro" id="IPR018316">
    <property type="entry name" value="Tubulin/FtsZ_2-layer-sand-dom"/>
</dbReference>
<dbReference type="InterPro" id="IPR036525">
    <property type="entry name" value="Tubulin/FtsZ_GTPase_sf"/>
</dbReference>
<dbReference type="InterPro" id="IPR023123">
    <property type="entry name" value="Tubulin_C"/>
</dbReference>
<dbReference type="InterPro" id="IPR017975">
    <property type="entry name" value="Tubulin_CS"/>
</dbReference>
<dbReference type="InterPro" id="IPR003008">
    <property type="entry name" value="Tubulin_FtsZ_GTPase"/>
</dbReference>
<dbReference type="PANTHER" id="PTHR11588">
    <property type="entry name" value="TUBULIN"/>
    <property type="match status" value="1"/>
</dbReference>
<dbReference type="Pfam" id="PF00091">
    <property type="entry name" value="Tubulin"/>
    <property type="match status" value="1"/>
</dbReference>
<dbReference type="Pfam" id="PF03953">
    <property type="entry name" value="Tubulin_C"/>
    <property type="match status" value="1"/>
</dbReference>
<dbReference type="PRINTS" id="PR01163">
    <property type="entry name" value="BETATUBULIN"/>
</dbReference>
<dbReference type="PRINTS" id="PR01161">
    <property type="entry name" value="TUBULIN"/>
</dbReference>
<dbReference type="SMART" id="SM00864">
    <property type="entry name" value="Tubulin"/>
    <property type="match status" value="1"/>
</dbReference>
<dbReference type="SMART" id="SM00865">
    <property type="entry name" value="Tubulin_C"/>
    <property type="match status" value="1"/>
</dbReference>
<dbReference type="SUPFAM" id="SSF55307">
    <property type="entry name" value="Tubulin C-terminal domain-like"/>
    <property type="match status" value="1"/>
</dbReference>
<dbReference type="SUPFAM" id="SSF52490">
    <property type="entry name" value="Tubulin nucleotide-binding domain-like"/>
    <property type="match status" value="1"/>
</dbReference>
<dbReference type="PROSITE" id="PS00227">
    <property type="entry name" value="TUBULIN"/>
    <property type="match status" value="1"/>
</dbReference>
<dbReference type="PROSITE" id="PS00228">
    <property type="entry name" value="TUBULIN_B_AUTOREG"/>
    <property type="match status" value="1"/>
</dbReference>
<sequence>MREIVHVQVGQCGNQVGAKFWEVVSEEHGIDSAGTYKGDTDLQLERINVYYNEVAGSKYVPRAVLVDLEPGVLDSIRASSIGSMFRPDNFTHAQSGAGNNWAKGHYTEGAELVESVVDVVRKEAENCDCLQGFQICHSLGGGTGSGLGTLLISKIREEFPDRMMCTFSVMPSPKVSDTVVEPYNATLSIHQLVENADEVMCIDNEALYDICFRTLKLTTPTYGDLNHLVSGVMSGITACLRFPGQLNSDLRKLAVNLIPFPRLHFFLIGYAPLTARSAMGFRALTVPELTQQIFDSRNMMAASDPRHGRYLTASATFRGKMSTKEVDEQMHAVQTKNSSFFVEWIPNNIKSSVCDIPPKGMKMSATFIGNNTCIQELFKRIGLQFSAMFRRKAFLHWYTGEGMDEMEFTEAESNMNDLVSEYQQYQEASVDDEAMEDDAEAEGGAGQNEAVEEF</sequence>
<reference key="1">
    <citation type="journal article" date="1988" name="Mol. Cell. Biol.">
        <title>A gene encoding the major beta tubulin of the mitotic spindle in Physarum polycephalum plasmodia.</title>
        <authorList>
            <person name="Burland T.G."/>
            <person name="Paul E.C.A."/>
            <person name="Oetliker M."/>
            <person name="Dove W.F."/>
        </authorList>
    </citation>
    <scope>NUCLEOTIDE SEQUENCE [MRNA]</scope>
</reference>
<proteinExistence type="evidence at transcript level"/>